<gene>
    <name type="primary">ZYP1A</name>
    <name type="ordered locus">At1g22260</name>
    <name type="ORF">T16E15.12</name>
</gene>
<feature type="chain" id="PRO_0000220590" description="Synaptonemal complex protein 1">
    <location>
        <begin position="1"/>
        <end position="871"/>
    </location>
</feature>
<feature type="region of interest" description="Disordered" evidence="2">
    <location>
        <begin position="1"/>
        <end position="40"/>
    </location>
</feature>
<feature type="region of interest" description="Disordered" evidence="2">
    <location>
        <begin position="708"/>
        <end position="741"/>
    </location>
</feature>
<feature type="region of interest" description="Disordered" evidence="2">
    <location>
        <begin position="778"/>
        <end position="871"/>
    </location>
</feature>
<feature type="coiled-coil region" evidence="1">
    <location>
        <begin position="58"/>
        <end position="304"/>
    </location>
</feature>
<feature type="coiled-coil region" evidence="1">
    <location>
        <begin position="331"/>
        <end position="608"/>
    </location>
</feature>
<feature type="compositionally biased region" description="Polar residues" evidence="2">
    <location>
        <begin position="18"/>
        <end position="40"/>
    </location>
</feature>
<feature type="compositionally biased region" description="Polar residues" evidence="2">
    <location>
        <begin position="719"/>
        <end position="728"/>
    </location>
</feature>
<feature type="compositionally biased region" description="Basic and acidic residues" evidence="2">
    <location>
        <begin position="729"/>
        <end position="741"/>
    </location>
</feature>
<feature type="compositionally biased region" description="Polar residues" evidence="2">
    <location>
        <begin position="831"/>
        <end position="847"/>
    </location>
</feature>
<name>SYCP1_ARATH</name>
<evidence type="ECO:0000255" key="1"/>
<evidence type="ECO:0000256" key="2">
    <source>
        <dbReference type="SAM" id="MobiDB-lite"/>
    </source>
</evidence>
<evidence type="ECO:0000305" key="3"/>
<dbReference type="EMBL" id="DQ028764">
    <property type="protein sequence ID" value="AAY46119.1"/>
    <property type="molecule type" value="mRNA"/>
</dbReference>
<dbReference type="EMBL" id="AC068562">
    <property type="protein sequence ID" value="AAF87265.1"/>
    <property type="molecule type" value="Genomic_DNA"/>
</dbReference>
<dbReference type="EMBL" id="CP002684">
    <property type="protein sequence ID" value="AEE30217.1"/>
    <property type="molecule type" value="Genomic_DNA"/>
</dbReference>
<dbReference type="PIR" id="D86355">
    <property type="entry name" value="D86355"/>
</dbReference>
<dbReference type="RefSeq" id="NP_173645.3">
    <property type="nucleotide sequence ID" value="NM_102076.4"/>
</dbReference>
<dbReference type="SMR" id="Q9LME2"/>
<dbReference type="FunCoup" id="Q9LME2">
    <property type="interactions" value="781"/>
</dbReference>
<dbReference type="STRING" id="3702.Q9LME2"/>
<dbReference type="PaxDb" id="3702-AT1G22260.1"/>
<dbReference type="EnsemblPlants" id="AT1G22260.1">
    <property type="protein sequence ID" value="AT1G22260.1"/>
    <property type="gene ID" value="AT1G22260"/>
</dbReference>
<dbReference type="GeneID" id="838831"/>
<dbReference type="Gramene" id="AT1G22260.1">
    <property type="protein sequence ID" value="AT1G22260.1"/>
    <property type="gene ID" value="AT1G22260"/>
</dbReference>
<dbReference type="KEGG" id="ath:AT1G22260"/>
<dbReference type="Araport" id="AT1G22260"/>
<dbReference type="TAIR" id="AT1G22260">
    <property type="gene designation" value="ZYP1A"/>
</dbReference>
<dbReference type="eggNOG" id="ENOG502QSSX">
    <property type="taxonomic scope" value="Eukaryota"/>
</dbReference>
<dbReference type="HOGENOM" id="CLU_010415_0_0_1"/>
<dbReference type="InParanoid" id="Q9LME2"/>
<dbReference type="OMA" id="CKAESKH"/>
<dbReference type="OrthoDB" id="783434at2759"/>
<dbReference type="PhylomeDB" id="Q9LME2"/>
<dbReference type="PRO" id="PR:Q9LME2"/>
<dbReference type="Proteomes" id="UP000006548">
    <property type="component" value="Chromosome 1"/>
</dbReference>
<dbReference type="ExpressionAtlas" id="Q9LME2">
    <property type="expression patterns" value="baseline and differential"/>
</dbReference>
<dbReference type="GO" id="GO:0005634">
    <property type="term" value="C:nucleus"/>
    <property type="evidence" value="ECO:0007005"/>
    <property type="project" value="TAIR"/>
</dbReference>
<dbReference type="GO" id="GO:0000795">
    <property type="term" value="C:synaptonemal complex"/>
    <property type="evidence" value="ECO:0000314"/>
    <property type="project" value="TAIR"/>
</dbReference>
<dbReference type="GO" id="GO:0051301">
    <property type="term" value="P:cell division"/>
    <property type="evidence" value="ECO:0007669"/>
    <property type="project" value="UniProtKB-KW"/>
</dbReference>
<dbReference type="GO" id="GO:0007129">
    <property type="term" value="P:homologous chromosome pairing at meiosis"/>
    <property type="evidence" value="ECO:0000315"/>
    <property type="project" value="TAIR"/>
</dbReference>
<dbReference type="GO" id="GO:0007131">
    <property type="term" value="P:reciprocal meiotic recombination"/>
    <property type="evidence" value="ECO:0000315"/>
    <property type="project" value="TAIR"/>
</dbReference>
<dbReference type="PANTHER" id="PTHR23160:SF3">
    <property type="entry name" value="SYNAPTONEMAL COMPLEX PROTEIN 1-RELATED"/>
    <property type="match status" value="1"/>
</dbReference>
<dbReference type="PANTHER" id="PTHR23160">
    <property type="entry name" value="SYNAPTONEMAL COMPLEX PROTEIN-RELATED"/>
    <property type="match status" value="1"/>
</dbReference>
<sequence length="871" mass="100007">MQKLGFPAMKSLDKPRSLSGSANMYSFSNRKPPDSVSSGSFSNLKLTAEKLVKDQAAMRTDLELANCKLKKSMEHVYALEEKLQNAFNENAKLRVRKKEDEKLWRGLESKFSSTKTLCDQLTETLQHLASQVQDAEKDKGFFETKFSTSSEAIDSLNQQMRDMSLRLDAAKEEITSRDKELEELKLEKQQKEMFYQTERCGTASLIEKKDAVITKLEASAAERKLNIENLNSQLEKVHLELTTKEDEVKDLVSIQEKLEKEKTSVQLSADNCFEKLVSSEQEVKKLDELVQYLVAELTELDKKNLTFKEKFDKLSGLYDTHIMLLQKDRDLALDRAQRSFDNLQGELFRVAATKEALESAGNELNEKIVELQNDKESLISQLSGLRCSTSQTIDKLESEAKGLVSKHADAESAISQLKEEMETLLESVKTSEDKKQELSLKLSSLEMESKEKCEKLQADAQRQVEELETLQKESESHQLQADLLAKEVNQLQTVIEEKGHVILQCNENEKQLNQQIIKDKELLATAETKLAEAKKQYDLMLESKQLELSRHLKELSQRNDQAINEIRRKYDVEKHEIINSEKDKVEKIIKDLSNKFDKELSDCKEESKRQLLTIQEEHSSLILSLREEHESKELNLKAKYDQELRQSQIQAENELKERITALKSEHDAQLKAFKCQYEDDCKKLQEELDLQRKKEERQRALVQLQWKVMSDNPPEEQEVNSNKNYSISKDSRLGGSKRSEHIRVRSDNDNVQDSPFVKAKETPVSKILKKAQNVNAGSVLSIPNPKHHSKVTHREYEVETNNGRVTKRRKTRNTTMFEEPQRRRTRATPKLTPQSIAKGTGMTSHARSANIGDLFSEGSLNPYADDPYAFD</sequence>
<keyword id="KW-0131">Cell cycle</keyword>
<keyword id="KW-0132">Cell division</keyword>
<keyword id="KW-0175">Coiled coil</keyword>
<keyword id="KW-0469">Meiosis</keyword>
<keyword id="KW-0539">Nucleus</keyword>
<keyword id="KW-1185">Reference proteome</keyword>
<protein>
    <recommendedName>
        <fullName>Synaptonemal complex protein 1</fullName>
    </recommendedName>
    <alternativeName>
        <fullName>Synaptonemal complex central region protein ZYP1a</fullName>
    </alternativeName>
</protein>
<proteinExistence type="evidence at transcript level"/>
<reference key="1">
    <citation type="journal article" date="2005" name="Genes Dev.">
        <title>The Arabidopsis synaptonemal complex protein ZYP1 is required for chromosome synapsis and normal fidelity of crossing over.</title>
        <authorList>
            <person name="Higgins J.D."/>
            <person name="Sanchez-Moran E."/>
            <person name="Armstrong S.J."/>
            <person name="Jones G.H."/>
            <person name="Franklin F.C."/>
        </authorList>
    </citation>
    <scope>NUCLEOTIDE SEQUENCE [MRNA]</scope>
</reference>
<reference key="2">
    <citation type="journal article" date="2000" name="Nature">
        <title>Sequence and analysis of chromosome 1 of the plant Arabidopsis thaliana.</title>
        <authorList>
            <person name="Theologis A."/>
            <person name="Ecker J.R."/>
            <person name="Palm C.J."/>
            <person name="Federspiel N.A."/>
            <person name="Kaul S."/>
            <person name="White O."/>
            <person name="Alonso J."/>
            <person name="Altafi H."/>
            <person name="Araujo R."/>
            <person name="Bowman C.L."/>
            <person name="Brooks S.Y."/>
            <person name="Buehler E."/>
            <person name="Chan A."/>
            <person name="Chao Q."/>
            <person name="Chen H."/>
            <person name="Cheuk R.F."/>
            <person name="Chin C.W."/>
            <person name="Chung M.K."/>
            <person name="Conn L."/>
            <person name="Conway A.B."/>
            <person name="Conway A.R."/>
            <person name="Creasy T.H."/>
            <person name="Dewar K."/>
            <person name="Dunn P."/>
            <person name="Etgu P."/>
            <person name="Feldblyum T.V."/>
            <person name="Feng J.-D."/>
            <person name="Fong B."/>
            <person name="Fujii C.Y."/>
            <person name="Gill J.E."/>
            <person name="Goldsmith A.D."/>
            <person name="Haas B."/>
            <person name="Hansen N.F."/>
            <person name="Hughes B."/>
            <person name="Huizar L."/>
            <person name="Hunter J.L."/>
            <person name="Jenkins J."/>
            <person name="Johnson-Hopson C."/>
            <person name="Khan S."/>
            <person name="Khaykin E."/>
            <person name="Kim C.J."/>
            <person name="Koo H.L."/>
            <person name="Kremenetskaia I."/>
            <person name="Kurtz D.B."/>
            <person name="Kwan A."/>
            <person name="Lam B."/>
            <person name="Langin-Hooper S."/>
            <person name="Lee A."/>
            <person name="Lee J.M."/>
            <person name="Lenz C.A."/>
            <person name="Li J.H."/>
            <person name="Li Y.-P."/>
            <person name="Lin X."/>
            <person name="Liu S.X."/>
            <person name="Liu Z.A."/>
            <person name="Luros J.S."/>
            <person name="Maiti R."/>
            <person name="Marziali A."/>
            <person name="Militscher J."/>
            <person name="Miranda M."/>
            <person name="Nguyen M."/>
            <person name="Nierman W.C."/>
            <person name="Osborne B.I."/>
            <person name="Pai G."/>
            <person name="Peterson J."/>
            <person name="Pham P.K."/>
            <person name="Rizzo M."/>
            <person name="Rooney T."/>
            <person name="Rowley D."/>
            <person name="Sakano H."/>
            <person name="Salzberg S.L."/>
            <person name="Schwartz J.R."/>
            <person name="Shinn P."/>
            <person name="Southwick A.M."/>
            <person name="Sun H."/>
            <person name="Tallon L.J."/>
            <person name="Tambunga G."/>
            <person name="Toriumi M.J."/>
            <person name="Town C.D."/>
            <person name="Utterback T."/>
            <person name="Van Aken S."/>
            <person name="Vaysberg M."/>
            <person name="Vysotskaia V.S."/>
            <person name="Walker M."/>
            <person name="Wu D."/>
            <person name="Yu G."/>
            <person name="Fraser C.M."/>
            <person name="Venter J.C."/>
            <person name="Davis R.W."/>
        </authorList>
    </citation>
    <scope>NUCLEOTIDE SEQUENCE [LARGE SCALE GENOMIC DNA]</scope>
    <source>
        <strain>cv. Columbia</strain>
    </source>
</reference>
<reference key="3">
    <citation type="journal article" date="2017" name="Plant J.">
        <title>Araport11: a complete reannotation of the Arabidopsis thaliana reference genome.</title>
        <authorList>
            <person name="Cheng C.Y."/>
            <person name="Krishnakumar V."/>
            <person name="Chan A.P."/>
            <person name="Thibaud-Nissen F."/>
            <person name="Schobel S."/>
            <person name="Town C.D."/>
        </authorList>
    </citation>
    <scope>GENOME REANNOTATION</scope>
    <source>
        <strain>cv. Columbia</strain>
    </source>
</reference>
<accession>Q9LME2</accession>
<accession>Q4TWG2</accession>
<organism>
    <name type="scientific">Arabidopsis thaliana</name>
    <name type="common">Mouse-ear cress</name>
    <dbReference type="NCBI Taxonomy" id="3702"/>
    <lineage>
        <taxon>Eukaryota</taxon>
        <taxon>Viridiplantae</taxon>
        <taxon>Streptophyta</taxon>
        <taxon>Embryophyta</taxon>
        <taxon>Tracheophyta</taxon>
        <taxon>Spermatophyta</taxon>
        <taxon>Magnoliopsida</taxon>
        <taxon>eudicotyledons</taxon>
        <taxon>Gunneridae</taxon>
        <taxon>Pentapetalae</taxon>
        <taxon>rosids</taxon>
        <taxon>malvids</taxon>
        <taxon>Brassicales</taxon>
        <taxon>Brassicaceae</taxon>
        <taxon>Camelineae</taxon>
        <taxon>Arabidopsis</taxon>
    </lineage>
</organism>
<comment type="function">
    <text>Required for chromosome synapsis and normal fidelity of crossing over.</text>
</comment>
<comment type="subcellular location">
    <subcellularLocation>
        <location evidence="3">Nucleus</location>
    </subcellularLocation>
</comment>